<comment type="function">
    <text evidence="1">Catalyzes the cross-linking of a glutamate residue and a tyrosine residue in the PqqA protein as part of the biosynthesis of pyrroloquinoline quinone (PQQ).</text>
</comment>
<comment type="catalytic activity">
    <reaction evidence="1">
        <text>[PQQ precursor protein] + S-adenosyl-L-methionine = E-Y cross-linked-[PQQ precursor protein] + 5'-deoxyadenosine + L-methionine + H(+)</text>
        <dbReference type="Rhea" id="RHEA:56836"/>
        <dbReference type="Rhea" id="RHEA-COMP:14800"/>
        <dbReference type="Rhea" id="RHEA-COMP:14801"/>
        <dbReference type="ChEBI" id="CHEBI:15378"/>
        <dbReference type="ChEBI" id="CHEBI:17319"/>
        <dbReference type="ChEBI" id="CHEBI:57844"/>
        <dbReference type="ChEBI" id="CHEBI:59789"/>
        <dbReference type="ChEBI" id="CHEBI:141026"/>
        <dbReference type="ChEBI" id="CHEBI:141027"/>
        <dbReference type="EC" id="1.21.98.4"/>
    </reaction>
</comment>
<comment type="cofactor">
    <cofactor evidence="1">
        <name>[4Fe-4S] cluster</name>
        <dbReference type="ChEBI" id="CHEBI:49883"/>
    </cofactor>
    <text evidence="1">Binds 1 [4Fe-4S] cluster. The cluster is coordinated with 3 cysteines and an exchangeable S-adenosyl-L-methionine.</text>
</comment>
<comment type="pathway">
    <text evidence="1">Cofactor biosynthesis; pyrroloquinoline quinone biosynthesis.</text>
</comment>
<comment type="subunit">
    <text evidence="1">Interacts with PqqD. The interaction is necessary for activity of PqqE.</text>
</comment>
<comment type="similarity">
    <text evidence="1">Belongs to the radical SAM superfamily. PqqE family.</text>
</comment>
<protein>
    <recommendedName>
        <fullName evidence="1">PqqA peptide cyclase</fullName>
        <ecNumber evidence="1">1.21.98.4</ecNumber>
    </recommendedName>
    <alternativeName>
        <fullName evidence="1">Coenzyme PQQ synthesis protein E</fullName>
    </alternativeName>
    <alternativeName>
        <fullName evidence="1">Pyrroloquinoline quinone biosynthesis protein E</fullName>
    </alternativeName>
</protein>
<accession>Q6N8F3</accession>
<dbReference type="EC" id="1.21.98.4" evidence="1"/>
<dbReference type="EMBL" id="BX572599">
    <property type="protein sequence ID" value="CAE27391.1"/>
    <property type="molecule type" value="Genomic_DNA"/>
</dbReference>
<dbReference type="SMR" id="Q6N8F3"/>
<dbReference type="STRING" id="258594.RPA1950"/>
<dbReference type="eggNOG" id="COG0535">
    <property type="taxonomic scope" value="Bacteria"/>
</dbReference>
<dbReference type="HOGENOM" id="CLU_009273_4_7_5"/>
<dbReference type="PhylomeDB" id="Q6N8F3"/>
<dbReference type="UniPathway" id="UPA00539"/>
<dbReference type="GO" id="GO:0051539">
    <property type="term" value="F:4 iron, 4 sulfur cluster binding"/>
    <property type="evidence" value="ECO:0007669"/>
    <property type="project" value="UniProtKB-KW"/>
</dbReference>
<dbReference type="GO" id="GO:0009975">
    <property type="term" value="F:cyclase activity"/>
    <property type="evidence" value="ECO:0007669"/>
    <property type="project" value="UniProtKB-UniRule"/>
</dbReference>
<dbReference type="GO" id="GO:0005506">
    <property type="term" value="F:iron ion binding"/>
    <property type="evidence" value="ECO:0007669"/>
    <property type="project" value="UniProtKB-UniRule"/>
</dbReference>
<dbReference type="GO" id="GO:0016491">
    <property type="term" value="F:oxidoreductase activity"/>
    <property type="evidence" value="ECO:0007669"/>
    <property type="project" value="UniProtKB-KW"/>
</dbReference>
<dbReference type="GO" id="GO:1904047">
    <property type="term" value="F:S-adenosyl-L-methionine binding"/>
    <property type="evidence" value="ECO:0007669"/>
    <property type="project" value="UniProtKB-UniRule"/>
</dbReference>
<dbReference type="GO" id="GO:0018189">
    <property type="term" value="P:pyrroloquinoline quinone biosynthetic process"/>
    <property type="evidence" value="ECO:0007669"/>
    <property type="project" value="UniProtKB-UniRule"/>
</dbReference>
<dbReference type="CDD" id="cd01335">
    <property type="entry name" value="Radical_SAM"/>
    <property type="match status" value="1"/>
</dbReference>
<dbReference type="CDD" id="cd21119">
    <property type="entry name" value="SPASM_PqqE"/>
    <property type="match status" value="1"/>
</dbReference>
<dbReference type="Gene3D" id="3.20.20.70">
    <property type="entry name" value="Aldolase class I"/>
    <property type="match status" value="1"/>
</dbReference>
<dbReference type="HAMAP" id="MF_00660">
    <property type="entry name" value="PqqE"/>
    <property type="match status" value="1"/>
</dbReference>
<dbReference type="InterPro" id="IPR023885">
    <property type="entry name" value="4Fe4S-binding_SPASM_dom"/>
</dbReference>
<dbReference type="InterPro" id="IPR013785">
    <property type="entry name" value="Aldolase_TIM"/>
</dbReference>
<dbReference type="InterPro" id="IPR006638">
    <property type="entry name" value="Elp3/MiaA/NifB-like_rSAM"/>
</dbReference>
<dbReference type="InterPro" id="IPR000385">
    <property type="entry name" value="MoaA_NifB_PqqE_Fe-S-bd_CS"/>
</dbReference>
<dbReference type="InterPro" id="IPR011843">
    <property type="entry name" value="PQQ_synth_PqqE_bac"/>
</dbReference>
<dbReference type="InterPro" id="IPR017200">
    <property type="entry name" value="PqqE-like"/>
</dbReference>
<dbReference type="InterPro" id="IPR050377">
    <property type="entry name" value="Radical_SAM_PqqE_MftC-like"/>
</dbReference>
<dbReference type="InterPro" id="IPR007197">
    <property type="entry name" value="rSAM"/>
</dbReference>
<dbReference type="NCBIfam" id="TIGR02109">
    <property type="entry name" value="PQQ_syn_pqqE"/>
    <property type="match status" value="1"/>
</dbReference>
<dbReference type="NCBIfam" id="TIGR04085">
    <property type="entry name" value="rSAM_more_4Fe4S"/>
    <property type="match status" value="1"/>
</dbReference>
<dbReference type="PANTHER" id="PTHR11228:SF7">
    <property type="entry name" value="PQQA PEPTIDE CYCLASE"/>
    <property type="match status" value="1"/>
</dbReference>
<dbReference type="PANTHER" id="PTHR11228">
    <property type="entry name" value="RADICAL SAM DOMAIN PROTEIN"/>
    <property type="match status" value="1"/>
</dbReference>
<dbReference type="Pfam" id="PF13353">
    <property type="entry name" value="Fer4_12"/>
    <property type="match status" value="1"/>
</dbReference>
<dbReference type="Pfam" id="PF04055">
    <property type="entry name" value="Radical_SAM"/>
    <property type="match status" value="1"/>
</dbReference>
<dbReference type="Pfam" id="PF13186">
    <property type="entry name" value="SPASM"/>
    <property type="match status" value="1"/>
</dbReference>
<dbReference type="PIRSF" id="PIRSF037420">
    <property type="entry name" value="PQQ_syn_pqqE"/>
    <property type="match status" value="1"/>
</dbReference>
<dbReference type="SFLD" id="SFLDF00280">
    <property type="entry name" value="coenzyme_PQQ_synthesis_protein"/>
    <property type="match status" value="1"/>
</dbReference>
<dbReference type="SFLD" id="SFLDG01386">
    <property type="entry name" value="main_SPASM_domain-containing"/>
    <property type="match status" value="1"/>
</dbReference>
<dbReference type="SMART" id="SM00729">
    <property type="entry name" value="Elp3"/>
    <property type="match status" value="1"/>
</dbReference>
<dbReference type="SUPFAM" id="SSF102114">
    <property type="entry name" value="Radical SAM enzymes"/>
    <property type="match status" value="1"/>
</dbReference>
<dbReference type="PROSITE" id="PS01305">
    <property type="entry name" value="MOAA_NIFB_PQQE"/>
    <property type="match status" value="1"/>
</dbReference>
<dbReference type="PROSITE" id="PS51918">
    <property type="entry name" value="RADICAL_SAM"/>
    <property type="match status" value="1"/>
</dbReference>
<proteinExistence type="inferred from homology"/>
<name>PQQE_RHOPA</name>
<evidence type="ECO:0000255" key="1">
    <source>
        <dbReference type="HAMAP-Rule" id="MF_00660"/>
    </source>
</evidence>
<evidence type="ECO:0000255" key="2">
    <source>
        <dbReference type="PROSITE-ProRule" id="PRU01266"/>
    </source>
</evidence>
<organism>
    <name type="scientific">Rhodopseudomonas palustris (strain ATCC BAA-98 / CGA009)</name>
    <dbReference type="NCBI Taxonomy" id="258594"/>
    <lineage>
        <taxon>Bacteria</taxon>
        <taxon>Pseudomonadati</taxon>
        <taxon>Pseudomonadota</taxon>
        <taxon>Alphaproteobacteria</taxon>
        <taxon>Hyphomicrobiales</taxon>
        <taxon>Nitrobacteraceae</taxon>
        <taxon>Rhodopseudomonas</taxon>
    </lineage>
</organism>
<feature type="chain" id="PRO_0000219951" description="PqqA peptide cyclase">
    <location>
        <begin position="1"/>
        <end position="377"/>
    </location>
</feature>
<feature type="domain" description="Radical SAM core" evidence="2">
    <location>
        <begin position="12"/>
        <end position="228"/>
    </location>
</feature>
<feature type="binding site" evidence="1">
    <location>
        <position position="26"/>
    </location>
    <ligand>
        <name>[4Fe-4S] cluster</name>
        <dbReference type="ChEBI" id="CHEBI:49883"/>
        <note>4Fe-4S-S-AdoMet</note>
    </ligand>
</feature>
<feature type="binding site" evidence="1">
    <location>
        <position position="30"/>
    </location>
    <ligand>
        <name>[4Fe-4S] cluster</name>
        <dbReference type="ChEBI" id="CHEBI:49883"/>
        <note>4Fe-4S-S-AdoMet</note>
    </ligand>
</feature>
<feature type="binding site" evidence="1">
    <location>
        <position position="33"/>
    </location>
    <ligand>
        <name>[4Fe-4S] cluster</name>
        <dbReference type="ChEBI" id="CHEBI:49883"/>
        <note>4Fe-4S-S-AdoMet</note>
    </ligand>
</feature>
<reference key="1">
    <citation type="journal article" date="2004" name="Nat. Biotechnol.">
        <title>Complete genome sequence of the metabolically versatile photosynthetic bacterium Rhodopseudomonas palustris.</title>
        <authorList>
            <person name="Larimer F.W."/>
            <person name="Chain P."/>
            <person name="Hauser L."/>
            <person name="Lamerdin J.E."/>
            <person name="Malfatti S."/>
            <person name="Do L."/>
            <person name="Land M.L."/>
            <person name="Pelletier D.A."/>
            <person name="Beatty J.T."/>
            <person name="Lang A.S."/>
            <person name="Tabita F.R."/>
            <person name="Gibson J.L."/>
            <person name="Hanson T.E."/>
            <person name="Bobst C."/>
            <person name="Torres y Torres J.L."/>
            <person name="Peres C."/>
            <person name="Harrison F.H."/>
            <person name="Gibson J."/>
            <person name="Harwood C.S."/>
        </authorList>
    </citation>
    <scope>NUCLEOTIDE SEQUENCE [LARGE SCALE GENOMIC DNA]</scope>
    <source>
        <strain>ATCC BAA-98 / CGA009</strain>
    </source>
</reference>
<gene>
    <name evidence="1" type="primary">pqqE</name>
    <name type="ordered locus">RPA1950</name>
</gene>
<keyword id="KW-0004">4Fe-4S</keyword>
<keyword id="KW-0408">Iron</keyword>
<keyword id="KW-0411">Iron-sulfur</keyword>
<keyword id="KW-0479">Metal-binding</keyword>
<keyword id="KW-0560">Oxidoreductase</keyword>
<keyword id="KW-0884">PQQ biosynthesis</keyword>
<keyword id="KW-0949">S-adenosyl-L-methionine</keyword>
<sequence>MLEKSGSVAETFGIPLAVLLELTHRCPLQCPYCSNPLELERGGAELSTDEWKRVLSELARIGVLQVHFSGGEPTARKDLVELVRHATEVGLYTNLITSAVLLSRERLAALADAGLAHVQISFQGSEATIADRVGGFAGGHAKKLDVARWTRELDLPLTVNAVMHRQNLHLLPDIIELALALDADRLEVANVQYYGWALKNRAALMPTLAQIEDCTATVEAARERLKGQLAIDYVIPDYYAARPKKCMGGWGRQFFNISPSGKVLPCHAAETITGLDFPSVRNGASIAEIWRSAEAFNRYRGTGWMQQPCASCAFKEIDFGGCRCQAFALAGDAAATDPACALSPLHDRIFKTAEAEAASGSDRFLYRNFAGGTVEGA</sequence>